<keyword id="KW-0027">Amidation</keyword>
<keyword id="KW-0165">Cleavage on pair of basic residues</keyword>
<keyword id="KW-0372">Hormone</keyword>
<keyword id="KW-1185">Reference proteome</keyword>
<keyword id="KW-0964">Secreted</keyword>
<keyword id="KW-0732">Signal</keyword>
<feature type="signal peptide">
    <location>
        <begin position="1"/>
        <end position="29"/>
    </location>
</feature>
<feature type="peptide" id="PRO_0000025368" description="Pancreatic polypeptide">
    <location>
        <begin position="30"/>
        <end position="65"/>
    </location>
</feature>
<feature type="peptide" id="PRO_0000025369" description="C-terminal peptide">
    <location>
        <begin position="69"/>
        <end position="100"/>
    </location>
</feature>
<feature type="modified residue" description="Tyrosine amide" evidence="1">
    <location>
        <position position="65"/>
    </location>
</feature>
<name>PAHO_MOUSE</name>
<dbReference type="EMBL" id="M18208">
    <property type="protein sequence ID" value="AAA39967.1"/>
    <property type="molecule type" value="mRNA"/>
</dbReference>
<dbReference type="CCDS" id="CCDS25486.1"/>
<dbReference type="PIR" id="B28261">
    <property type="entry name" value="B28261"/>
</dbReference>
<dbReference type="RefSeq" id="NP_032944.1">
    <property type="nucleotide sequence ID" value="NM_008918.2"/>
</dbReference>
<dbReference type="FunCoup" id="P10601">
    <property type="interactions" value="481"/>
</dbReference>
<dbReference type="STRING" id="10090.ENSMUSP00000017460"/>
<dbReference type="PaxDb" id="10090-ENSMUSP00000017460"/>
<dbReference type="ABCD" id="P10601">
    <property type="antibodies" value="5 sequenced antibodies"/>
</dbReference>
<dbReference type="DNASU" id="19064"/>
<dbReference type="Ensembl" id="ENSMUST00000017460.6">
    <property type="protein sequence ID" value="ENSMUSP00000017460.6"/>
    <property type="gene ID" value="ENSMUSG00000017316.14"/>
</dbReference>
<dbReference type="Ensembl" id="ENSMUST00000170554.9">
    <property type="protein sequence ID" value="ENSMUSP00000126798.3"/>
    <property type="gene ID" value="ENSMUSG00000017316.14"/>
</dbReference>
<dbReference type="GeneID" id="19064"/>
<dbReference type="KEGG" id="mmu:19064"/>
<dbReference type="UCSC" id="uc007lqm.1">
    <property type="organism name" value="mouse"/>
</dbReference>
<dbReference type="AGR" id="MGI:97753"/>
<dbReference type="CTD" id="5539"/>
<dbReference type="MGI" id="MGI:97753">
    <property type="gene designation" value="Ppy"/>
</dbReference>
<dbReference type="VEuPathDB" id="HostDB:ENSMUSG00000017316"/>
<dbReference type="eggNOG" id="ENOG502TD4B">
    <property type="taxonomic scope" value="Eukaryota"/>
</dbReference>
<dbReference type="GeneTree" id="ENSGT00530000064295"/>
<dbReference type="HOGENOM" id="CLU_165150_1_0_1"/>
<dbReference type="InParanoid" id="P10601"/>
<dbReference type="OMA" id="MAATRRC"/>
<dbReference type="OrthoDB" id="9901897at2759"/>
<dbReference type="PhylomeDB" id="P10601"/>
<dbReference type="TreeFam" id="TF332778"/>
<dbReference type="Reactome" id="R-MMU-375276">
    <property type="pathway name" value="Peptide ligand-binding receptors"/>
</dbReference>
<dbReference type="Reactome" id="R-MMU-418594">
    <property type="pathway name" value="G alpha (i) signalling events"/>
</dbReference>
<dbReference type="BioGRID-ORCS" id="19064">
    <property type="hits" value="3 hits in 76 CRISPR screens"/>
</dbReference>
<dbReference type="PRO" id="PR:P10601"/>
<dbReference type="Proteomes" id="UP000000589">
    <property type="component" value="Chromosome 11"/>
</dbReference>
<dbReference type="RNAct" id="P10601">
    <property type="molecule type" value="protein"/>
</dbReference>
<dbReference type="Bgee" id="ENSMUSG00000017316">
    <property type="expression patterns" value="Expressed in islet of Langerhans and 11 other cell types or tissues"/>
</dbReference>
<dbReference type="ExpressionAtlas" id="P10601">
    <property type="expression patterns" value="baseline and differential"/>
</dbReference>
<dbReference type="GO" id="GO:0005737">
    <property type="term" value="C:cytoplasm"/>
    <property type="evidence" value="ECO:0000314"/>
    <property type="project" value="MGI"/>
</dbReference>
<dbReference type="GO" id="GO:0005615">
    <property type="term" value="C:extracellular space"/>
    <property type="evidence" value="ECO:0000314"/>
    <property type="project" value="MGI"/>
</dbReference>
<dbReference type="GO" id="GO:0001664">
    <property type="term" value="F:G protein-coupled receptor binding"/>
    <property type="evidence" value="ECO:0000314"/>
    <property type="project" value="MGI"/>
</dbReference>
<dbReference type="GO" id="GO:0005179">
    <property type="term" value="F:hormone activity"/>
    <property type="evidence" value="ECO:0007669"/>
    <property type="project" value="UniProtKB-KW"/>
</dbReference>
<dbReference type="CDD" id="cd00126">
    <property type="entry name" value="PAH"/>
    <property type="match status" value="1"/>
</dbReference>
<dbReference type="Gene3D" id="6.10.250.900">
    <property type="match status" value="1"/>
</dbReference>
<dbReference type="InterPro" id="IPR001955">
    <property type="entry name" value="Pancreatic_hormone-like"/>
</dbReference>
<dbReference type="InterPro" id="IPR020392">
    <property type="entry name" value="Pancreatic_hormone-like_CS"/>
</dbReference>
<dbReference type="PANTHER" id="PTHR10533">
    <property type="entry name" value="NEUROPEPTIDE Y/PANCREATIC HORMONE/PEPTIDE YY"/>
    <property type="match status" value="1"/>
</dbReference>
<dbReference type="PANTHER" id="PTHR10533:SF2">
    <property type="entry name" value="PANCREATIC POLYPEPTIDE PROHORMONE"/>
    <property type="match status" value="1"/>
</dbReference>
<dbReference type="Pfam" id="PF00159">
    <property type="entry name" value="Hormone_3"/>
    <property type="match status" value="1"/>
</dbReference>
<dbReference type="PRINTS" id="PR00278">
    <property type="entry name" value="PANCHORMONE"/>
</dbReference>
<dbReference type="SMART" id="SM00309">
    <property type="entry name" value="PAH"/>
    <property type="match status" value="1"/>
</dbReference>
<dbReference type="PROSITE" id="PS00265">
    <property type="entry name" value="PANCREATIC_HORMONE_1"/>
    <property type="match status" value="1"/>
</dbReference>
<dbReference type="PROSITE" id="PS50276">
    <property type="entry name" value="PANCREATIC_HORMONE_2"/>
    <property type="match status" value="1"/>
</dbReference>
<evidence type="ECO:0000250" key="1"/>
<evidence type="ECO:0000250" key="2">
    <source>
        <dbReference type="UniProtKB" id="P01298"/>
    </source>
</evidence>
<evidence type="ECO:0000303" key="3">
    <source>
    </source>
</evidence>
<evidence type="ECO:0000305" key="4"/>
<organism>
    <name type="scientific">Mus musculus</name>
    <name type="common">Mouse</name>
    <dbReference type="NCBI Taxonomy" id="10090"/>
    <lineage>
        <taxon>Eukaryota</taxon>
        <taxon>Metazoa</taxon>
        <taxon>Chordata</taxon>
        <taxon>Craniata</taxon>
        <taxon>Vertebrata</taxon>
        <taxon>Euteleostomi</taxon>
        <taxon>Mammalia</taxon>
        <taxon>Eutheria</taxon>
        <taxon>Euarchontoglires</taxon>
        <taxon>Glires</taxon>
        <taxon>Rodentia</taxon>
        <taxon>Myomorpha</taxon>
        <taxon>Muroidea</taxon>
        <taxon>Muridae</taxon>
        <taxon>Murinae</taxon>
        <taxon>Mus</taxon>
        <taxon>Mus</taxon>
    </lineage>
</organism>
<reference key="1">
    <citation type="journal article" date="1988" name="J. Biol. Chem.">
        <title>Mosaic evolution of prepropancreatic polypeptide. II. Structural conservation and divergence in pancreatic polypeptide gene.</title>
        <authorList>
            <person name="Yonekura H."/>
            <person name="Nata K."/>
            <person name="Watanabe T."/>
            <person name="Kurashina Y."/>
            <person name="Yamamoto H."/>
            <person name="Okamoto H."/>
        </authorList>
    </citation>
    <scope>NUCLEOTIDE SEQUENCE [GENOMIC DNA / MRNA]</scope>
    <source>
        <tissue>Pancreas</tissue>
    </source>
</reference>
<sequence>MAVAYCCLSLFLVSTWVALLLQPLQGTWGAPLEPMYPGDYATPEQMAQYETQLRRYINTLTRPRYGKRAEEENTGGLPGVQLSPCTSPPVGLIPCSAPWS</sequence>
<protein>
    <recommendedName>
        <fullName evidence="4">Pancreatic polypeptide prohormone</fullName>
    </recommendedName>
    <component>
        <recommendedName>
            <fullName evidence="3">Pancreatic polypeptide</fullName>
            <shortName evidence="3">PP</shortName>
        </recommendedName>
    </component>
    <component>
        <recommendedName>
            <fullName>C-terminal peptide</fullName>
        </recommendedName>
    </component>
</protein>
<gene>
    <name type="primary">Ppy</name>
</gene>
<accession>P10601</accession>
<comment type="function">
    <molecule>Pancreatic polypeptide</molecule>
    <text evidence="2">Hormone secreted by pancreatic cells that acts as a regulator of pancreatic and gastrointestinal functions probably by signaling through the G protein-coupled receptor NPY4R2.</text>
</comment>
<comment type="subcellular location">
    <subcellularLocation>
        <location evidence="2">Secreted</location>
    </subcellularLocation>
</comment>
<comment type="PTM">
    <text>No icosapeptide-like peptide is cleaved from the C-terminal.</text>
</comment>
<comment type="similarity">
    <text evidence="4">Belongs to the NPY family.</text>
</comment>
<proteinExistence type="inferred from homology"/>